<reference key="1">
    <citation type="journal article" date="2015" name="Planta">
        <title>Differential regulation of caffeine metabolism in Coffea arabica (Arabica) and Coffea canephora (Robusta).</title>
        <authorList>
            <person name="Perrois C."/>
            <person name="Strickler S.R."/>
            <person name="Mathieu G."/>
            <person name="Lepelley M."/>
            <person name="Bedon L."/>
            <person name="Michaux S."/>
            <person name="Husson J."/>
            <person name="Mueller L."/>
            <person name="Privat I."/>
        </authorList>
    </citation>
    <scope>NUCLEOTIDE SEQUENCE [GENOMIC DNA / MRNA]</scope>
    <scope>TISSUE SPECIFICITY</scope>
    <scope>GENE FAMILY</scope>
    <scope>NOMENCLATURE</scope>
    <source>
        <strain>cv. Caturra</strain>
        <strain>cv. ET39</strain>
    </source>
</reference>
<reference key="2">
    <citation type="journal article" date="2008" name="Phytochemistry">
        <title>Caffeine and related purine alkaloids: biosynthesis, catabolism, function and genetic engineering.</title>
        <authorList>
            <person name="Ashihara H."/>
            <person name="Sano H."/>
            <person name="Crozier A."/>
        </authorList>
    </citation>
    <scope>REVIEW ON CAFFEINE BIOSYNTHESIS</scope>
</reference>
<evidence type="ECO:0000250" key="1">
    <source>
        <dbReference type="UniProtKB" id="A4GE69"/>
    </source>
</evidence>
<evidence type="ECO:0000250" key="2">
    <source>
        <dbReference type="UniProtKB" id="A4GE70"/>
    </source>
</evidence>
<evidence type="ECO:0000250" key="3">
    <source>
        <dbReference type="UniProtKB" id="Q9AVK0"/>
    </source>
</evidence>
<evidence type="ECO:0000250" key="4">
    <source>
        <dbReference type="UniProtKB" id="Q9FLN8"/>
    </source>
</evidence>
<evidence type="ECO:0000250" key="5">
    <source>
        <dbReference type="UniProtKB" id="Q9FZN8"/>
    </source>
</evidence>
<evidence type="ECO:0000269" key="6">
    <source>
    </source>
</evidence>
<evidence type="ECO:0000303" key="7">
    <source>
    </source>
</evidence>
<evidence type="ECO:0000305" key="8"/>
<feature type="chain" id="PRO_0000451779" description="Xanthosine methyltransferase 2">
    <location>
        <begin position="1"/>
        <end position="385"/>
    </location>
</feature>
<feature type="binding site" evidence="2">
    <location>
        <position position="18"/>
    </location>
    <ligand>
        <name>S-adenosyl-L-homocysteine</name>
        <dbReference type="ChEBI" id="CHEBI:57856"/>
    </ligand>
</feature>
<feature type="binding site" evidence="1">
    <location>
        <position position="21"/>
    </location>
    <ligand>
        <name>xanthosine</name>
        <dbReference type="ChEBI" id="CHEBI:18107"/>
    </ligand>
</feature>
<feature type="binding site" evidence="1">
    <location>
        <position position="25"/>
    </location>
    <ligand>
        <name>xanthosine</name>
        <dbReference type="ChEBI" id="CHEBI:18107"/>
    </ligand>
</feature>
<feature type="binding site" evidence="2">
    <location>
        <position position="62"/>
    </location>
    <ligand>
        <name>S-adenosyl-L-homocysteine</name>
        <dbReference type="ChEBI" id="CHEBI:57856"/>
    </ligand>
</feature>
<feature type="binding site" evidence="2">
    <location>
        <position position="67"/>
    </location>
    <ligand>
        <name>S-adenosyl-L-homocysteine</name>
        <dbReference type="ChEBI" id="CHEBI:57856"/>
    </ligand>
</feature>
<feature type="binding site" evidence="2">
    <location>
        <position position="101"/>
    </location>
    <ligand>
        <name>S-adenosyl-L-homocysteine</name>
        <dbReference type="ChEBI" id="CHEBI:57856"/>
    </ligand>
</feature>
<feature type="binding site" evidence="2">
    <location>
        <position position="102"/>
    </location>
    <ligand>
        <name>S-adenosyl-L-homocysteine</name>
        <dbReference type="ChEBI" id="CHEBI:57856"/>
    </ligand>
</feature>
<feature type="binding site" evidence="2">
    <location>
        <position position="140"/>
    </location>
    <ligand>
        <name>S-adenosyl-L-homocysteine</name>
        <dbReference type="ChEBI" id="CHEBI:57856"/>
    </ligand>
</feature>
<feature type="binding site" evidence="2">
    <location>
        <position position="141"/>
    </location>
    <ligand>
        <name>S-adenosyl-L-homocysteine</name>
        <dbReference type="ChEBI" id="CHEBI:57856"/>
    </ligand>
</feature>
<feature type="binding site" evidence="1">
    <location>
        <position position="157"/>
    </location>
    <ligand>
        <name>S-adenosyl-L-homocysteine</name>
        <dbReference type="ChEBI" id="CHEBI:57856"/>
    </ligand>
</feature>
<feature type="binding site" evidence="1">
    <location>
        <position position="158"/>
    </location>
    <ligand>
        <name>xanthosine</name>
        <dbReference type="ChEBI" id="CHEBI:18107"/>
    </ligand>
</feature>
<feature type="binding site" evidence="2">
    <location>
        <position position="159"/>
    </location>
    <ligand>
        <name>S-adenosyl-L-homocysteine</name>
        <dbReference type="ChEBI" id="CHEBI:57856"/>
    </ligand>
</feature>
<feature type="binding site" evidence="1">
    <location>
        <position position="161"/>
    </location>
    <ligand>
        <name>xanthosine</name>
        <dbReference type="ChEBI" id="CHEBI:18107"/>
    </ligand>
</feature>
<feature type="binding site" evidence="1">
    <location>
        <position position="162"/>
    </location>
    <ligand>
        <name>xanthosine</name>
        <dbReference type="ChEBI" id="CHEBI:18107"/>
    </ligand>
</feature>
<feature type="binding site" evidence="4">
    <location>
        <position position="179"/>
    </location>
    <ligand>
        <name>Mg(2+)</name>
        <dbReference type="ChEBI" id="CHEBI:18420"/>
    </ligand>
</feature>
<feature type="binding site" evidence="4">
    <location>
        <position position="261"/>
    </location>
    <ligand>
        <name>Mg(2+)</name>
        <dbReference type="ChEBI" id="CHEBI:18420"/>
    </ligand>
</feature>
<feature type="binding site" evidence="4">
    <location>
        <position position="263"/>
    </location>
    <ligand>
        <name>Mg(2+)</name>
        <dbReference type="ChEBI" id="CHEBI:18420"/>
    </ligand>
</feature>
<feature type="binding site" evidence="4">
    <location>
        <position position="264"/>
    </location>
    <ligand>
        <name>Mg(2+)</name>
        <dbReference type="ChEBI" id="CHEBI:18420"/>
    </ligand>
</feature>
<feature type="binding site" evidence="1">
    <location>
        <position position="329"/>
    </location>
    <ligand>
        <name>xanthosine</name>
        <dbReference type="ChEBI" id="CHEBI:18107"/>
    </ligand>
</feature>
<feature type="binding site" evidence="1">
    <location>
        <position position="334"/>
    </location>
    <ligand>
        <name>xanthosine</name>
        <dbReference type="ChEBI" id="CHEBI:18107"/>
    </ligand>
</feature>
<feature type="binding site" evidence="1">
    <location>
        <position position="369"/>
    </location>
    <ligand>
        <name>xanthosine</name>
        <dbReference type="ChEBI" id="CHEBI:18107"/>
    </ligand>
</feature>
<feature type="site" description="Involved in substrate discrimination" evidence="5">
    <location>
        <position position="155"/>
    </location>
</feature>
<feature type="site" description="Involved in substrate discrimination" evidence="5">
    <location>
        <position position="267"/>
    </location>
</feature>
<feature type="site" description="Involved in substrate discrimination" evidence="5">
    <location>
        <position position="344"/>
    </location>
</feature>
<feature type="sequence conflict" description="In Ref. 1; AFV60450." evidence="8" ref="1">
    <original>R</original>
    <variation>Q</variation>
    <location>
        <position position="8"/>
    </location>
</feature>
<feature type="sequence conflict" description="In Ref. 1; AFV60450." evidence="8" ref="1">
    <original>M</original>
    <variation>V</variation>
    <location>
        <position position="385"/>
    </location>
</feature>
<organism>
    <name type="scientific">Coffea arabica</name>
    <name type="common">Arabian coffee</name>
    <dbReference type="NCBI Taxonomy" id="13443"/>
    <lineage>
        <taxon>Eukaryota</taxon>
        <taxon>Viridiplantae</taxon>
        <taxon>Streptophyta</taxon>
        <taxon>Embryophyta</taxon>
        <taxon>Tracheophyta</taxon>
        <taxon>Spermatophyta</taxon>
        <taxon>Magnoliopsida</taxon>
        <taxon>eudicotyledons</taxon>
        <taxon>Gunneridae</taxon>
        <taxon>Pentapetalae</taxon>
        <taxon>asterids</taxon>
        <taxon>lamiids</taxon>
        <taxon>Gentianales</taxon>
        <taxon>Rubiaceae</taxon>
        <taxon>Ixoroideae</taxon>
        <taxon>Gardenieae complex</taxon>
        <taxon>Bertiereae - Coffeeae clade</taxon>
        <taxon>Coffeeae</taxon>
        <taxon>Coffea</taxon>
    </lineage>
</organism>
<name>XMT2_COFAR</name>
<proteinExistence type="evidence at transcript level"/>
<keyword id="KW-0460">Magnesium</keyword>
<keyword id="KW-0479">Metal-binding</keyword>
<keyword id="KW-0489">Methyltransferase</keyword>
<keyword id="KW-1185">Reference proteome</keyword>
<keyword id="KW-0949">S-adenosyl-L-methionine</keyword>
<keyword id="KW-0808">Transferase</keyword>
<protein>
    <recommendedName>
        <fullName evidence="7">Xanthosine methyltransferase 2</fullName>
        <shortName evidence="7">CaXMT2</shortName>
        <ecNumber evidence="3">2.1.1.158</ecNumber>
    </recommendedName>
</protein>
<sequence>MELQEVLRMNGGEGDTSYAKNSAYNHLVLNKVKPVLEQCIRELLRASLPNINKCIKVADLGCASGPNTLLTVRDIVQSIDKVGQEKKNELERPTIQIFLNDLFQNDFNSVFKLLPSFYRKLEKENGRKIGSCLIGAMPGSFYSRLFPEESMHFLHSCYCLHWLSQVPSGLVTELGISTNKGSIYSSKASRLPVQKAYLDQFTKDFTTFLRIHSEELFSHGRMLLTCICKGVEFDALNAIDLLEMAINDLVVEGHLEEEKLDSFNLPVYIPSAEEVKCIVEEEGSFEILYLETFKVLYDAGFSIDDNYPVRSHVQVYSDEHIKAEYVASSVRAVYEPILASHFGEAIIPDIFHRFAKHAAKVLPLGKAYYNNLIISLAKKPEKSDM</sequence>
<gene>
    <name evidence="7" type="primary">XMT2</name>
</gene>
<comment type="function">
    <text evidence="3">Involved in the biosynthesis of caffeine (By similarity). Specific for xanthosine and could not use xanthosine 5'-monophosphate (XMP) as substrate (By similarity). Catalyzes the 7-N-methylation activity of xanthosine, but does not have 1-N- or 3-N-methylation activity (By similarity).</text>
</comment>
<comment type="catalytic activity">
    <reaction evidence="3">
        <text>xanthosine + S-adenosyl-L-methionine = 7-methylxanthosine + S-adenosyl-L-homocysteine</text>
        <dbReference type="Rhea" id="RHEA:15025"/>
        <dbReference type="ChEBI" id="CHEBI:18107"/>
        <dbReference type="ChEBI" id="CHEBI:49310"/>
        <dbReference type="ChEBI" id="CHEBI:57856"/>
        <dbReference type="ChEBI" id="CHEBI:59789"/>
        <dbReference type="EC" id="2.1.1.158"/>
    </reaction>
    <physiologicalReaction direction="left-to-right" evidence="3">
        <dbReference type="Rhea" id="RHEA:15026"/>
    </physiologicalReaction>
</comment>
<comment type="cofactor">
    <cofactor evidence="4">
        <name>Mg(2+)</name>
        <dbReference type="ChEBI" id="CHEBI:18420"/>
    </cofactor>
    <text evidence="4">Binds 1 Mg(2+) ion per subunit.</text>
</comment>
<comment type="pathway">
    <text evidence="3">Alkaloid biosynthesis.</text>
</comment>
<comment type="tissue specificity">
    <text evidence="6">Expressed at low levels in young leaves but not in mature leaves (PubMed:25249475). Barely detectable in fruits (grains) (PubMed:25249475).</text>
</comment>
<comment type="similarity">
    <text evidence="8">Belongs to the methyltransferase superfamily. Type-7 methyltransferase family.</text>
</comment>
<dbReference type="EC" id="2.1.1.158" evidence="3"/>
<dbReference type="EMBL" id="JX978515">
    <property type="protein sequence ID" value="AFV60443.1"/>
    <property type="molecule type" value="Genomic_DNA"/>
</dbReference>
<dbReference type="EMBL" id="JX978522">
    <property type="protein sequence ID" value="AFV60450.1"/>
    <property type="molecule type" value="mRNA"/>
</dbReference>
<dbReference type="SMR" id="A0A096VHY7"/>
<dbReference type="Proteomes" id="UP000515148">
    <property type="component" value="Unplaced"/>
</dbReference>
<dbReference type="GO" id="GO:0046872">
    <property type="term" value="F:metal ion binding"/>
    <property type="evidence" value="ECO:0007669"/>
    <property type="project" value="UniProtKB-KW"/>
</dbReference>
<dbReference type="GO" id="GO:0008168">
    <property type="term" value="F:methyltransferase activity"/>
    <property type="evidence" value="ECO:0007669"/>
    <property type="project" value="UniProtKB-KW"/>
</dbReference>
<dbReference type="GO" id="GO:0032259">
    <property type="term" value="P:methylation"/>
    <property type="evidence" value="ECO:0007669"/>
    <property type="project" value="UniProtKB-KW"/>
</dbReference>
<dbReference type="Gene3D" id="1.10.1200.270">
    <property type="entry name" value="Methyltransferase, alpha-helical capping domain"/>
    <property type="match status" value="1"/>
</dbReference>
<dbReference type="Gene3D" id="3.40.50.150">
    <property type="entry name" value="Vaccinia Virus protein VP39"/>
    <property type="match status" value="1"/>
</dbReference>
<dbReference type="InterPro" id="IPR005299">
    <property type="entry name" value="MeTrfase_7"/>
</dbReference>
<dbReference type="InterPro" id="IPR042086">
    <property type="entry name" value="MeTrfase_capping"/>
</dbReference>
<dbReference type="InterPro" id="IPR029063">
    <property type="entry name" value="SAM-dependent_MTases_sf"/>
</dbReference>
<dbReference type="PANTHER" id="PTHR31009">
    <property type="entry name" value="S-ADENOSYL-L-METHIONINE:CARBOXYL METHYLTRANSFERASE FAMILY PROTEIN"/>
    <property type="match status" value="1"/>
</dbReference>
<dbReference type="Pfam" id="PF03492">
    <property type="entry name" value="Methyltransf_7"/>
    <property type="match status" value="1"/>
</dbReference>
<dbReference type="SUPFAM" id="SSF53335">
    <property type="entry name" value="S-adenosyl-L-methionine-dependent methyltransferases"/>
    <property type="match status" value="1"/>
</dbReference>
<accession>A0A096VHY7</accession>
<accession>A0A096VHY8</accession>